<reference key="1">
    <citation type="journal article" date="1993" name="J. Gen. Microbiol.">
        <title>A comparison of the multiple alleles of xylS carried by TOL plasmids pWW53 and pDK1 and its implications for their evolutionary relationship.</title>
        <authorList>
            <person name="Assinder S.J."/>
            <person name="de Marco P."/>
            <person name="Osborne D.J."/>
            <person name="Poh C.L."/>
            <person name="Shaw L.E."/>
            <person name="Winson M.K."/>
            <person name="Williams P.A."/>
        </authorList>
    </citation>
    <scope>NUCLEOTIDE SEQUENCE [GENOMIC DNA]</scope>
    <source>
        <strain>MT53</strain>
    </source>
</reference>
<name>XYLS3_PSEPU</name>
<feature type="chain" id="PRO_0000194604" description="XylDLEGF operon transcriptional activator 3">
    <location>
        <begin position="1"/>
        <end position="331"/>
    </location>
</feature>
<feature type="domain" description="HTH araC/xylS-type" evidence="1">
    <location>
        <begin position="214"/>
        <end position="315"/>
    </location>
</feature>
<feature type="DNA-binding region" description="H-T-H motif" evidence="1">
    <location>
        <begin position="231"/>
        <end position="252"/>
    </location>
</feature>
<feature type="DNA-binding region" description="H-T-H motif" evidence="1">
    <location>
        <begin position="282"/>
        <end position="305"/>
    </location>
</feature>
<proteinExistence type="predicted"/>
<protein>
    <recommendedName>
        <fullName>XylDLEGF operon transcriptional activator 3</fullName>
    </recommendedName>
</protein>
<organism>
    <name type="scientific">Pseudomonas putida</name>
    <name type="common">Arthrobacter siderocapsulatus</name>
    <dbReference type="NCBI Taxonomy" id="303"/>
    <lineage>
        <taxon>Bacteria</taxon>
        <taxon>Pseudomonadati</taxon>
        <taxon>Pseudomonadota</taxon>
        <taxon>Gammaproteobacteria</taxon>
        <taxon>Pseudomonadales</taxon>
        <taxon>Pseudomonadaceae</taxon>
        <taxon>Pseudomonas</taxon>
    </lineage>
</organism>
<geneLocation type="plasmid">
    <name>TOL pWW53</name>
</geneLocation>
<comment type="function">
    <text>Regulatory protein of the TOL plasmid xyl operons. XylS activates the xylXYZLTEGFJQKIH operon required for the degradation of toluene, m-xylene and p-xylene.</text>
</comment>
<comment type="subcellular location">
    <subcellularLocation>
        <location>Cytoplasm</location>
    </subcellularLocation>
</comment>
<accession>Q05335</accession>
<keyword id="KW-0010">Activator</keyword>
<keyword id="KW-0058">Aromatic hydrocarbons catabolism</keyword>
<keyword id="KW-0963">Cytoplasm</keyword>
<keyword id="KW-0238">DNA-binding</keyword>
<keyword id="KW-0614">Plasmid</keyword>
<keyword id="KW-0804">Transcription</keyword>
<keyword id="KW-0805">Transcription regulation</keyword>
<evidence type="ECO:0000255" key="1">
    <source>
        <dbReference type="PROSITE-ProRule" id="PRU00593"/>
    </source>
</evidence>
<gene>
    <name type="primary">xylS3</name>
</gene>
<dbReference type="EMBL" id="L02357">
    <property type="protein sequence ID" value="AAA26032.1"/>
    <property type="molecule type" value="Genomic_DNA"/>
</dbReference>
<dbReference type="RefSeq" id="YP_709341.1">
    <property type="nucleotide sequence ID" value="NC_008275.1"/>
</dbReference>
<dbReference type="SMR" id="Q05335"/>
<dbReference type="GO" id="GO:0005737">
    <property type="term" value="C:cytoplasm"/>
    <property type="evidence" value="ECO:0007669"/>
    <property type="project" value="UniProtKB-SubCell"/>
</dbReference>
<dbReference type="GO" id="GO:0003700">
    <property type="term" value="F:DNA-binding transcription factor activity"/>
    <property type="evidence" value="ECO:0007669"/>
    <property type="project" value="InterPro"/>
</dbReference>
<dbReference type="GO" id="GO:0043565">
    <property type="term" value="F:sequence-specific DNA binding"/>
    <property type="evidence" value="ECO:0007669"/>
    <property type="project" value="InterPro"/>
</dbReference>
<dbReference type="GO" id="GO:0009056">
    <property type="term" value="P:catabolic process"/>
    <property type="evidence" value="ECO:0007669"/>
    <property type="project" value="UniProtKB-KW"/>
</dbReference>
<dbReference type="GO" id="GO:0009893">
    <property type="term" value="P:positive regulation of metabolic process"/>
    <property type="evidence" value="ECO:0007669"/>
    <property type="project" value="UniProtKB-ARBA"/>
</dbReference>
<dbReference type="Gene3D" id="1.10.10.60">
    <property type="entry name" value="Homeodomain-like"/>
    <property type="match status" value="1"/>
</dbReference>
<dbReference type="InterPro" id="IPR035418">
    <property type="entry name" value="AraC-bd_2"/>
</dbReference>
<dbReference type="InterPro" id="IPR050204">
    <property type="entry name" value="AraC_XylS_family_regulators"/>
</dbReference>
<dbReference type="InterPro" id="IPR009057">
    <property type="entry name" value="Homeodomain-like_sf"/>
</dbReference>
<dbReference type="InterPro" id="IPR018060">
    <property type="entry name" value="HTH_AraC"/>
</dbReference>
<dbReference type="InterPro" id="IPR018062">
    <property type="entry name" value="HTH_AraC-typ_CS"/>
</dbReference>
<dbReference type="PANTHER" id="PTHR46796:SF6">
    <property type="entry name" value="ARAC SUBFAMILY"/>
    <property type="match status" value="1"/>
</dbReference>
<dbReference type="PANTHER" id="PTHR46796">
    <property type="entry name" value="HTH-TYPE TRANSCRIPTIONAL ACTIVATOR RHAS-RELATED"/>
    <property type="match status" value="1"/>
</dbReference>
<dbReference type="Pfam" id="PF14525">
    <property type="entry name" value="AraC_binding_2"/>
    <property type="match status" value="1"/>
</dbReference>
<dbReference type="Pfam" id="PF12833">
    <property type="entry name" value="HTH_18"/>
    <property type="match status" value="1"/>
</dbReference>
<dbReference type="SMART" id="SM00342">
    <property type="entry name" value="HTH_ARAC"/>
    <property type="match status" value="1"/>
</dbReference>
<dbReference type="SUPFAM" id="SSF46689">
    <property type="entry name" value="Homeodomain-like"/>
    <property type="match status" value="1"/>
</dbReference>
<dbReference type="PROSITE" id="PS00041">
    <property type="entry name" value="HTH_ARAC_FAMILY_1"/>
    <property type="match status" value="1"/>
</dbReference>
<dbReference type="PROSITE" id="PS01124">
    <property type="entry name" value="HTH_ARAC_FAMILY_2"/>
    <property type="match status" value="1"/>
</dbReference>
<sequence>MDCRLLNEKSRIFVNADPYFVSDYVNQHVGSHCIRLPKSGCPEASLNHSTFGSLDLCRISYGGSVRVTSPGLETCYHLQVLLKGHCLWRGYGLEHYFSPGELLLINPDDRADLTYSEDCEKFIVKLPSVVLDRACSESYWHKPSEGIRFTTRHNLQQLDGFINLLGLVCDEAEHTNSMPRVQEYYTGIIATKLLEMLSSNVSRETFSEGCPSFERVVQFIEDNLKQSISLERLAELALMSPRSLYTLFEKHAGTTPKNYIRNRKLECIRARLSDPNANVRSVTEMALDYGFFHTGRFAENYRSTFGELPSDTLRRRKMKWLDPEESLPPLP</sequence>